<feature type="chain" id="PRO_0000096795" description="NEDD4 family-interacting protein 2">
    <location>
        <begin position="1" status="less than"/>
        <end position="311"/>
    </location>
</feature>
<feature type="topological domain" description="Cytoplasmic" evidence="3">
    <location>
        <begin position="1" status="less than"/>
        <end position="206"/>
    </location>
</feature>
<feature type="transmembrane region" description="Helical" evidence="3">
    <location>
        <begin position="207"/>
        <end position="227"/>
    </location>
</feature>
<feature type="topological domain" description="Extracellular" evidence="3">
    <location>
        <begin position="228"/>
        <end position="232"/>
    </location>
</feature>
<feature type="transmembrane region" description="Helical" evidence="3">
    <location>
        <begin position="233"/>
        <end position="253"/>
    </location>
</feature>
<feature type="topological domain" description="Cytoplasmic" evidence="3">
    <location>
        <begin position="254"/>
        <end position="262"/>
    </location>
</feature>
<feature type="transmembrane region" description="Helical" evidence="3">
    <location>
        <begin position="263"/>
        <end position="283"/>
    </location>
</feature>
<feature type="topological domain" description="Extracellular" evidence="3">
    <location>
        <begin position="284"/>
        <end position="311"/>
    </location>
</feature>
<feature type="region of interest" description="Disordered" evidence="4">
    <location>
        <begin position="1"/>
        <end position="133"/>
    </location>
</feature>
<feature type="region of interest" description="Interaction with NEDD4" evidence="9">
    <location>
        <begin position="123"/>
        <end position="126"/>
    </location>
</feature>
<feature type="short sequence motif" description="PPxY motif 1">
    <location>
        <begin position="123"/>
        <end position="126"/>
    </location>
</feature>
<feature type="short sequence motif" description="PPxY motif 2">
    <location>
        <begin position="149"/>
        <end position="152"/>
    </location>
</feature>
<feature type="short sequence motif" description="PPxY motif 3">
    <location>
        <begin position="159"/>
        <end position="161"/>
    </location>
</feature>
<feature type="compositionally biased region" description="Low complexity" evidence="4">
    <location>
        <begin position="7"/>
        <end position="22"/>
    </location>
</feature>
<feature type="compositionally biased region" description="Gly residues" evidence="4">
    <location>
        <begin position="26"/>
        <end position="37"/>
    </location>
</feature>
<feature type="compositionally biased region" description="Low complexity" evidence="4">
    <location>
        <begin position="38"/>
        <end position="47"/>
    </location>
</feature>
<feature type="compositionally biased region" description="Basic and acidic residues" evidence="4">
    <location>
        <begin position="48"/>
        <end position="75"/>
    </location>
</feature>
<feature type="compositionally biased region" description="Polar residues" evidence="4">
    <location>
        <begin position="92"/>
        <end position="101"/>
    </location>
</feature>
<feature type="compositionally biased region" description="Low complexity" evidence="4">
    <location>
        <begin position="102"/>
        <end position="120"/>
    </location>
</feature>
<feature type="modified residue" description="Phosphotyrosine; by SRC" evidence="2">
    <location>
        <position position="126"/>
    </location>
</feature>
<feature type="modified residue" description="Phosphotyrosine; by SRC" evidence="2">
    <location>
        <position position="142"/>
    </location>
</feature>
<feature type="modified residue" description="Phosphotyrosine; by SRC" evidence="2">
    <location>
        <position position="146"/>
    </location>
</feature>
<feature type="modified residue" description="Phosphotyrosine; by SRC" evidence="2">
    <location>
        <position position="152"/>
    </location>
</feature>
<feature type="splice variant" id="VSP_015438" description="In isoform 2." evidence="8">
    <original>FSDYFTGY</original>
    <variation>VSILIIFM</variation>
    <location>
        <begin position="256"/>
        <end position="263"/>
    </location>
</feature>
<feature type="splice variant" id="VSP_015439" description="In isoform 2." evidence="8">
    <location>
        <begin position="264"/>
        <end position="311"/>
    </location>
</feature>
<feature type="sequence conflict" description="In Ref. 2; BAC33869." evidence="9" ref="2">
    <original>S</original>
    <variation>T</variation>
    <location>
        <position position="38"/>
    </location>
</feature>
<feature type="sequence conflict" description="In Ref. 2; BAC27240." evidence="9" ref="2">
    <original>R</original>
    <variation>S</variation>
    <location>
        <position position="70"/>
    </location>
</feature>
<feature type="sequence conflict" description="In Ref. 1; AAH71237." evidence="9" ref="1">
    <original>A</original>
    <variation>T</variation>
    <location>
        <position position="113"/>
    </location>
</feature>
<feature type="sequence conflict" description="In Ref. 2; BAC37471." evidence="9" ref="2">
    <original>S</original>
    <variation>G</variation>
    <location>
        <position position="298"/>
    </location>
</feature>
<feature type="non-terminal residue">
    <location>
        <position position="1"/>
    </location>
</feature>
<accession>Q91ZP6</accession>
<accession>Q5DTZ9</accession>
<accession>Q6IR02</accession>
<accession>Q8BVC5</accession>
<name>NFIP2_MOUSE</name>
<comment type="function">
    <text evidence="2 5 6 7">Activates HECT domain-containing E3 ubiquitin-protein ligases, including ITCH, NEDD4, NEDD4L, SMURF2, WWP1 and WWP2, and consequently modulates the stability of their targets. As a result, may control many cellular processes. Recruits ITCH, NEDD4 and SMURF2 to endosomal membranes. Negatively regulates KCNH2 potassium channel activity by decreasing its cell-surface expression and interfering with channel maturation through recruitment of NEDD4L to the Golgi apparatus and multivesicular body where it mediates KCNH2 degradation (By similarity). May modulate EGFR signaling (By similarity). Together with NDFIP1, limits the cytokine signaling and expansion of effector Th2 T-cells by promoting degradation of JAK1, probably by ITCH- and NEDD4L-mediated ubiquitination (PubMed:27088444).</text>
</comment>
<comment type="subunit">
    <text evidence="2 5 6">Forms heterodimers with NDFIP1 (By similarity). Interacts with HECT domain-containing E3 ubiquitin-protein ligases, including NEDD4 (PubMed:12050153, PubMed:15252135). Interacts with NEDD4L (PubMed:12050153). When phosphorylated at Tyr-142, interacts with SRC and LYN SH2 domain (By similarity). May thus act as a scaffold that recruits SRC to NDFIP1, enhancing NDFIP1 phosphorylation (By similarity). Interacts with SLC11A2/DMT1 (By similarity). May interact with phosphorylated EGFR (By similarity). Interacts with KCNH2 (By similarity).</text>
</comment>
<comment type="subcellular location">
    <subcellularLocation>
        <location evidence="5">Endosome membrane</location>
        <topology evidence="5">Multi-pass membrane protein</topology>
    </subcellularLocation>
    <subcellularLocation>
        <location evidence="6">Golgi apparatus membrane</location>
    </subcellularLocation>
    <subcellularLocation>
        <location evidence="6">Endosome</location>
        <location evidence="6">Multivesicular body membrane</location>
        <topology evidence="6">Multi-pass membrane protein</topology>
    </subcellularLocation>
</comment>
<comment type="alternative products">
    <event type="alternative splicing"/>
    <isoform>
        <id>Q91ZP6-1</id>
        <name>1</name>
        <sequence type="displayed"/>
    </isoform>
    <isoform>
        <id>Q91ZP6-2</id>
        <name>2</name>
        <sequence type="described" ref="VSP_015438 VSP_015439"/>
    </isoform>
</comment>
<comment type="tissue specificity">
    <text evidence="5">Ubiquitously expressed, with highest levels in brain, liver, kidney and testis.</text>
</comment>
<comment type="domain">
    <text evidence="1">The PPxY motifs are required for E3 ubiquitin-protein ligase activation and for ubiquitination.</text>
</comment>
<comment type="PTM">
    <text evidence="1 9">Ubiquitinated by NEDD4 and NEDD4L; which does not affect turnover (Probable). Also ubiquitinated by ITCH (By similarity).</text>
</comment>
<comment type="PTM">
    <text evidence="2">Undergoes transient tyrosine-phosphorylation following EGF stimulation, most probably catalyzed by SRC. Phosphorylation on Tyr-126, Tyr-146 and Tyr-152 are dependent on the phosphorylation on Tyr-142. Also phosphorylated by LYN and FYN (By similarity).</text>
</comment>
<comment type="disruption phenotype">
    <text evidence="7">Mutant mice show no signs of inflammation and have normal T-cell populations in thymus, lymph nodes and spleen.</text>
</comment>
<comment type="sequence caution" evidence="9">
    <conflict type="erroneous initiation">
        <sequence resource="EMBL-CDS" id="AAH71237"/>
    </conflict>
</comment>
<comment type="sequence caution" evidence="9">
    <conflict type="erroneous initiation">
        <sequence resource="EMBL-CDS" id="BAC27240"/>
    </conflict>
</comment>
<comment type="sequence caution" evidence="9">
    <conflict type="erroneous initiation">
        <sequence resource="EMBL-CDS" id="BAC33869"/>
    </conflict>
</comment>
<comment type="sequence caution" evidence="9">
    <conflict type="erroneous initiation">
        <sequence resource="EMBL-CDS" id="BAC37471"/>
    </conflict>
</comment>
<keyword id="KW-0025">Alternative splicing</keyword>
<keyword id="KW-0967">Endosome</keyword>
<keyword id="KW-0333">Golgi apparatus</keyword>
<keyword id="KW-0472">Membrane</keyword>
<keyword id="KW-0597">Phosphoprotein</keyword>
<keyword id="KW-1185">Reference proteome</keyword>
<keyword id="KW-0812">Transmembrane</keyword>
<keyword id="KW-1133">Transmembrane helix</keyword>
<keyword id="KW-0832">Ubl conjugation</keyword>
<sequence length="311" mass="33638">RRSASDAELSAGAEGATGSEAAPPGDLGGRTRGGGRGSAAAAATTSTREAEGAERRGDTPARKPDPEAGRMDHHQLGTGRYQVLHNEEDNSESSAVEQPSTSSLAAPTVEAAASAPALDPDSPPPYSSITVEAPTTSDTDVYSEFYPVPPPYSVATSLPTYDEAEKAKAAALAAAAADAPQRNQEEDCTPRDDFSDVEQLRVGNDGIFMLAFFMAFIFNWLGFCLSFCITNTIAGRYGAICGFGLSLIKWILIVRFSDYFTGYFNGQYWLWWIFLVLGLLLFFRGFVNYLKVRNMSESMAAAHRTRYFFLL</sequence>
<protein>
    <recommendedName>
        <fullName>NEDD4 family-interacting protein 2</fullName>
    </recommendedName>
    <alternativeName>
        <fullName>NEDD4 WW domain-binding protein 5A</fullName>
    </alternativeName>
</protein>
<organism>
    <name type="scientific">Mus musculus</name>
    <name type="common">Mouse</name>
    <dbReference type="NCBI Taxonomy" id="10090"/>
    <lineage>
        <taxon>Eukaryota</taxon>
        <taxon>Metazoa</taxon>
        <taxon>Chordata</taxon>
        <taxon>Craniata</taxon>
        <taxon>Vertebrata</taxon>
        <taxon>Euteleostomi</taxon>
        <taxon>Mammalia</taxon>
        <taxon>Eutheria</taxon>
        <taxon>Euarchontoglires</taxon>
        <taxon>Glires</taxon>
        <taxon>Rodentia</taxon>
        <taxon>Myomorpha</taxon>
        <taxon>Muroidea</taxon>
        <taxon>Muridae</taxon>
        <taxon>Murinae</taxon>
        <taxon>Mus</taxon>
        <taxon>Mus</taxon>
    </lineage>
</organism>
<evidence type="ECO:0000250" key="1"/>
<evidence type="ECO:0000250" key="2">
    <source>
        <dbReference type="UniProtKB" id="Q9NV92"/>
    </source>
</evidence>
<evidence type="ECO:0000255" key="3"/>
<evidence type="ECO:0000256" key="4">
    <source>
        <dbReference type="SAM" id="MobiDB-lite"/>
    </source>
</evidence>
<evidence type="ECO:0000269" key="5">
    <source>
    </source>
</evidence>
<evidence type="ECO:0000269" key="6">
    <source>
    </source>
</evidence>
<evidence type="ECO:0000269" key="7">
    <source>
    </source>
</evidence>
<evidence type="ECO:0000303" key="8">
    <source ref="4"/>
</evidence>
<evidence type="ECO:0000305" key="9"/>
<gene>
    <name type="primary">Ndfip2</name>
    <name type="synonym">Kiaa1165</name>
    <name type="synonym">N4wbp5A</name>
</gene>
<reference key="1">
    <citation type="journal article" date="2004" name="Genome Res.">
        <title>The status, quality, and expansion of the NIH full-length cDNA project: the Mammalian Gene Collection (MGC).</title>
        <authorList>
            <consortium name="The MGC Project Team"/>
        </authorList>
    </citation>
    <scope>NUCLEOTIDE SEQUENCE [LARGE SCALE MRNA] (ISOFORM 1)</scope>
    <source>
        <strain>FVB/N-3</strain>
        <tissue>Mammary gland</tissue>
    </source>
</reference>
<reference key="2">
    <citation type="journal article" date="2005" name="Science">
        <title>The transcriptional landscape of the mammalian genome.</title>
        <authorList>
            <person name="Carninci P."/>
            <person name="Kasukawa T."/>
            <person name="Katayama S."/>
            <person name="Gough J."/>
            <person name="Frith M.C."/>
            <person name="Maeda N."/>
            <person name="Oyama R."/>
            <person name="Ravasi T."/>
            <person name="Lenhard B."/>
            <person name="Wells C."/>
            <person name="Kodzius R."/>
            <person name="Shimokawa K."/>
            <person name="Bajic V.B."/>
            <person name="Brenner S.E."/>
            <person name="Batalov S."/>
            <person name="Forrest A.R."/>
            <person name="Zavolan M."/>
            <person name="Davis M.J."/>
            <person name="Wilming L.G."/>
            <person name="Aidinis V."/>
            <person name="Allen J.E."/>
            <person name="Ambesi-Impiombato A."/>
            <person name="Apweiler R."/>
            <person name="Aturaliya R.N."/>
            <person name="Bailey T.L."/>
            <person name="Bansal M."/>
            <person name="Baxter L."/>
            <person name="Beisel K.W."/>
            <person name="Bersano T."/>
            <person name="Bono H."/>
            <person name="Chalk A.M."/>
            <person name="Chiu K.P."/>
            <person name="Choudhary V."/>
            <person name="Christoffels A."/>
            <person name="Clutterbuck D.R."/>
            <person name="Crowe M.L."/>
            <person name="Dalla E."/>
            <person name="Dalrymple B.P."/>
            <person name="de Bono B."/>
            <person name="Della Gatta G."/>
            <person name="di Bernardo D."/>
            <person name="Down T."/>
            <person name="Engstrom P."/>
            <person name="Fagiolini M."/>
            <person name="Faulkner G."/>
            <person name="Fletcher C.F."/>
            <person name="Fukushima T."/>
            <person name="Furuno M."/>
            <person name="Futaki S."/>
            <person name="Gariboldi M."/>
            <person name="Georgii-Hemming P."/>
            <person name="Gingeras T.R."/>
            <person name="Gojobori T."/>
            <person name="Green R.E."/>
            <person name="Gustincich S."/>
            <person name="Harbers M."/>
            <person name="Hayashi Y."/>
            <person name="Hensch T.K."/>
            <person name="Hirokawa N."/>
            <person name="Hill D."/>
            <person name="Huminiecki L."/>
            <person name="Iacono M."/>
            <person name="Ikeo K."/>
            <person name="Iwama A."/>
            <person name="Ishikawa T."/>
            <person name="Jakt M."/>
            <person name="Kanapin A."/>
            <person name="Katoh M."/>
            <person name="Kawasawa Y."/>
            <person name="Kelso J."/>
            <person name="Kitamura H."/>
            <person name="Kitano H."/>
            <person name="Kollias G."/>
            <person name="Krishnan S.P."/>
            <person name="Kruger A."/>
            <person name="Kummerfeld S.K."/>
            <person name="Kurochkin I.V."/>
            <person name="Lareau L.F."/>
            <person name="Lazarevic D."/>
            <person name="Lipovich L."/>
            <person name="Liu J."/>
            <person name="Liuni S."/>
            <person name="McWilliam S."/>
            <person name="Madan Babu M."/>
            <person name="Madera M."/>
            <person name="Marchionni L."/>
            <person name="Matsuda H."/>
            <person name="Matsuzawa S."/>
            <person name="Miki H."/>
            <person name="Mignone F."/>
            <person name="Miyake S."/>
            <person name="Morris K."/>
            <person name="Mottagui-Tabar S."/>
            <person name="Mulder N."/>
            <person name="Nakano N."/>
            <person name="Nakauchi H."/>
            <person name="Ng P."/>
            <person name="Nilsson R."/>
            <person name="Nishiguchi S."/>
            <person name="Nishikawa S."/>
            <person name="Nori F."/>
            <person name="Ohara O."/>
            <person name="Okazaki Y."/>
            <person name="Orlando V."/>
            <person name="Pang K.C."/>
            <person name="Pavan W.J."/>
            <person name="Pavesi G."/>
            <person name="Pesole G."/>
            <person name="Petrovsky N."/>
            <person name="Piazza S."/>
            <person name="Reed J."/>
            <person name="Reid J.F."/>
            <person name="Ring B.Z."/>
            <person name="Ringwald M."/>
            <person name="Rost B."/>
            <person name="Ruan Y."/>
            <person name="Salzberg S.L."/>
            <person name="Sandelin A."/>
            <person name="Schneider C."/>
            <person name="Schoenbach C."/>
            <person name="Sekiguchi K."/>
            <person name="Semple C.A."/>
            <person name="Seno S."/>
            <person name="Sessa L."/>
            <person name="Sheng Y."/>
            <person name="Shibata Y."/>
            <person name="Shimada H."/>
            <person name="Shimada K."/>
            <person name="Silva D."/>
            <person name="Sinclair B."/>
            <person name="Sperling S."/>
            <person name="Stupka E."/>
            <person name="Sugiura K."/>
            <person name="Sultana R."/>
            <person name="Takenaka Y."/>
            <person name="Taki K."/>
            <person name="Tammoja K."/>
            <person name="Tan S.L."/>
            <person name="Tang S."/>
            <person name="Taylor M.S."/>
            <person name="Tegner J."/>
            <person name="Teichmann S.A."/>
            <person name="Ueda H.R."/>
            <person name="van Nimwegen E."/>
            <person name="Verardo R."/>
            <person name="Wei C.L."/>
            <person name="Yagi K."/>
            <person name="Yamanishi H."/>
            <person name="Zabarovsky E."/>
            <person name="Zhu S."/>
            <person name="Zimmer A."/>
            <person name="Hide W."/>
            <person name="Bult C."/>
            <person name="Grimmond S.M."/>
            <person name="Teasdale R.D."/>
            <person name="Liu E.T."/>
            <person name="Brusic V."/>
            <person name="Quackenbush J."/>
            <person name="Wahlestedt C."/>
            <person name="Mattick J.S."/>
            <person name="Hume D.A."/>
            <person name="Kai C."/>
            <person name="Sasaki D."/>
            <person name="Tomaru Y."/>
            <person name="Fukuda S."/>
            <person name="Kanamori-Katayama M."/>
            <person name="Suzuki M."/>
            <person name="Aoki J."/>
            <person name="Arakawa T."/>
            <person name="Iida J."/>
            <person name="Imamura K."/>
            <person name="Itoh M."/>
            <person name="Kato T."/>
            <person name="Kawaji H."/>
            <person name="Kawagashira N."/>
            <person name="Kawashima T."/>
            <person name="Kojima M."/>
            <person name="Kondo S."/>
            <person name="Konno H."/>
            <person name="Nakano K."/>
            <person name="Ninomiya N."/>
            <person name="Nishio T."/>
            <person name="Okada M."/>
            <person name="Plessy C."/>
            <person name="Shibata K."/>
            <person name="Shiraki T."/>
            <person name="Suzuki S."/>
            <person name="Tagami M."/>
            <person name="Waki K."/>
            <person name="Watahiki A."/>
            <person name="Okamura-Oho Y."/>
            <person name="Suzuki H."/>
            <person name="Kawai J."/>
            <person name="Hayashizaki Y."/>
        </authorList>
    </citation>
    <scope>NUCLEOTIDE SEQUENCE [LARGE SCALE MRNA] OF 5-311 (ISOFORM 1)</scope>
    <source>
        <strain>C57BL/6J</strain>
        <tissue>Cecum</tissue>
        <tissue>Forelimb</tissue>
        <tissue>Spinal cord</tissue>
    </source>
</reference>
<reference key="3">
    <citation type="journal article" date="2002" name="J. Biol. Chem.">
        <title>Regulation of the epithelial sodium channel by N4WBP5A, a novel Nedd4/Nedd4-2-interacting protein.</title>
        <authorList>
            <person name="Konstas A.-A."/>
            <person name="Shearwin-Whyatt L.M."/>
            <person name="Fotia A.B."/>
            <person name="Degger B."/>
            <person name="Riccardi D."/>
            <person name="Cook D.I."/>
            <person name="Korbmacher C."/>
            <person name="Kumar S."/>
        </authorList>
    </citation>
    <scope>NUCLEOTIDE SEQUENCE [MRNA] OF 71-311 (ISOFORM 1)</scope>
    <scope>FUNCTION</scope>
    <scope>INTERACTION WITH NEDD4 AND NEDD4L</scope>
    <scope>TISSUE SPECIFICITY</scope>
    <scope>SUBCELLULAR LOCATION</scope>
    <source>
        <strain>CBA/J</strain>
        <tissue>Brain</tissue>
    </source>
</reference>
<reference key="4">
    <citation type="submission" date="2005-02" db="EMBL/GenBank/DDBJ databases">
        <title>Prediction of the coding sequences of mouse homologues of KIAA gene. The complete nucleotide sequences of mouse KIAA-homologous cDNAs identified by screening of terminal sequences of cDNA clones randomly sampled from size-fractionated libraries.</title>
        <authorList>
            <person name="Okazaki N."/>
            <person name="Kikuno R.F."/>
            <person name="Ohara R."/>
            <person name="Inamoto S."/>
            <person name="Nagase T."/>
            <person name="Ohara O."/>
            <person name="Koga H."/>
        </authorList>
    </citation>
    <scope>NUCLEOTIDE SEQUENCE [LARGE SCALE MRNA] OF 158-311 (ISOFORM 2)</scope>
    <source>
        <tissue>Embryonic intestine</tissue>
    </source>
</reference>
<reference key="5">
    <citation type="journal article" date="2004" name="J. Cell Sci.">
        <title>N4WBP5A (Ndfip2), a Nedd4-interacting protein, localizes to multivesicular bodies and the Golgi, and has a potential role in protein trafficking.</title>
        <authorList>
            <person name="Shearwin-Whyatt L.M."/>
            <person name="Brown D.L."/>
            <person name="Wylie F.G."/>
            <person name="Stow J.L."/>
            <person name="Kumar S."/>
        </authorList>
    </citation>
    <scope>FUNCTION</scope>
    <scope>INTERACTION WITH NEDD4</scope>
    <scope>SUBCELLULAR LOCATION</scope>
    <scope>UBIQUITINATION</scope>
</reference>
<reference key="6">
    <citation type="journal article" date="2016" name="Nat. Commun.">
        <title>Ndfip-mediated degradation of Jak1 tunes cytokine signalling to limit expansion of CD4+ effector T cells.</title>
        <authorList>
            <person name="O'Leary C.E."/>
            <person name="Riling C.R."/>
            <person name="Spruce L.A."/>
            <person name="Ding H."/>
            <person name="Kumar S."/>
            <person name="Deng G."/>
            <person name="Liu Y."/>
            <person name="Seeholzer S.H."/>
            <person name="Oliver P.M."/>
        </authorList>
    </citation>
    <scope>FUNCTION</scope>
    <scope>DISRUPTION PHENOTYPE</scope>
</reference>
<dbReference type="EMBL" id="BC071237">
    <property type="protein sequence ID" value="AAH71237.1"/>
    <property type="status" value="ALT_INIT"/>
    <property type="molecule type" value="mRNA"/>
</dbReference>
<dbReference type="EMBL" id="AK031073">
    <property type="protein sequence ID" value="BAC27240.1"/>
    <property type="status" value="ALT_INIT"/>
    <property type="molecule type" value="mRNA"/>
</dbReference>
<dbReference type="EMBL" id="AK049678">
    <property type="protein sequence ID" value="BAC33869.1"/>
    <property type="status" value="ALT_INIT"/>
    <property type="molecule type" value="mRNA"/>
</dbReference>
<dbReference type="EMBL" id="AK078939">
    <property type="protein sequence ID" value="BAC37471.1"/>
    <property type="status" value="ALT_INIT"/>
    <property type="molecule type" value="mRNA"/>
</dbReference>
<dbReference type="EMBL" id="AF411608">
    <property type="protein sequence ID" value="AAL05872.1"/>
    <property type="molecule type" value="mRNA"/>
</dbReference>
<dbReference type="EMBL" id="AK220371">
    <property type="protein sequence ID" value="BAD90430.1"/>
    <property type="molecule type" value="mRNA"/>
</dbReference>
<dbReference type="SMR" id="Q91ZP6"/>
<dbReference type="DIP" id="DIP-58955N"/>
<dbReference type="FunCoup" id="Q91ZP6">
    <property type="interactions" value="1676"/>
</dbReference>
<dbReference type="IntAct" id="Q91ZP6">
    <property type="interactions" value="1"/>
</dbReference>
<dbReference type="STRING" id="10090.ENSMUSP00000137875"/>
<dbReference type="TCDB" id="8.A.30.1.1">
    <property type="family name" value="the nedd4-family interacting protein-2 (nedd4) family"/>
</dbReference>
<dbReference type="iPTMnet" id="Q91ZP6"/>
<dbReference type="PhosphoSitePlus" id="Q91ZP6"/>
<dbReference type="SwissPalm" id="Q91ZP6"/>
<dbReference type="PaxDb" id="10090-ENSMUSP00000137875"/>
<dbReference type="ProteomicsDB" id="252816">
    <molecule id="Q91ZP6-1"/>
</dbReference>
<dbReference type="ProteomicsDB" id="252817">
    <molecule id="Q91ZP6-2"/>
</dbReference>
<dbReference type="Pumba" id="Q91ZP6"/>
<dbReference type="AGR" id="MGI:1923523"/>
<dbReference type="MGI" id="MGI:1923523">
    <property type="gene designation" value="Ndfip2"/>
</dbReference>
<dbReference type="eggNOG" id="KOG4812">
    <property type="taxonomic scope" value="Eukaryota"/>
</dbReference>
<dbReference type="InParanoid" id="Q91ZP6"/>
<dbReference type="OMA" id="FASHENS"/>
<dbReference type="PhylomeDB" id="Q91ZP6"/>
<dbReference type="ChiTaRS" id="Ndfip2">
    <property type="organism name" value="mouse"/>
</dbReference>
<dbReference type="Proteomes" id="UP000000589">
    <property type="component" value="Unplaced"/>
</dbReference>
<dbReference type="RNAct" id="Q91ZP6">
    <property type="molecule type" value="protein"/>
</dbReference>
<dbReference type="GO" id="GO:0000139">
    <property type="term" value="C:Golgi membrane"/>
    <property type="evidence" value="ECO:0007669"/>
    <property type="project" value="UniProtKB-SubCell"/>
</dbReference>
<dbReference type="GO" id="GO:0016020">
    <property type="term" value="C:membrane"/>
    <property type="evidence" value="ECO:0000255"/>
    <property type="project" value="MGI"/>
</dbReference>
<dbReference type="GO" id="GO:0032585">
    <property type="term" value="C:multivesicular body membrane"/>
    <property type="evidence" value="ECO:0007669"/>
    <property type="project" value="UniProtKB-SubCell"/>
</dbReference>
<dbReference type="GO" id="GO:0030001">
    <property type="term" value="P:metal ion transport"/>
    <property type="evidence" value="ECO:0007669"/>
    <property type="project" value="InterPro"/>
</dbReference>
<dbReference type="GO" id="GO:0007034">
    <property type="term" value="P:vacuolar transport"/>
    <property type="evidence" value="ECO:0007669"/>
    <property type="project" value="InterPro"/>
</dbReference>
<dbReference type="CDD" id="cd22306">
    <property type="entry name" value="NDFIP2"/>
    <property type="match status" value="1"/>
</dbReference>
<dbReference type="InterPro" id="IPR019325">
    <property type="entry name" value="NEDD4/Bsd2"/>
</dbReference>
<dbReference type="PANTHER" id="PTHR13396">
    <property type="entry name" value="NEDD4 FAMILY INTERACTING PROTEIN 1/2"/>
    <property type="match status" value="1"/>
</dbReference>
<dbReference type="PANTHER" id="PTHR13396:SF4">
    <property type="entry name" value="NEDD4 FAMILY-INTERACTING PROTEIN 2"/>
    <property type="match status" value="1"/>
</dbReference>
<dbReference type="Pfam" id="PF10176">
    <property type="entry name" value="NEDD4_Bsd2"/>
    <property type="match status" value="2"/>
</dbReference>
<proteinExistence type="evidence at protein level"/>